<feature type="chain" id="PRO_0000298232" description="Ion-translocating oxidoreductase complex subunit D">
    <location>
        <begin position="1"/>
        <end position="358"/>
    </location>
</feature>
<feature type="transmembrane region" description="Helical" evidence="1">
    <location>
        <begin position="19"/>
        <end position="39"/>
    </location>
</feature>
<feature type="transmembrane region" description="Helical" evidence="1">
    <location>
        <begin position="41"/>
        <end position="61"/>
    </location>
</feature>
<feature type="transmembrane region" description="Helical" evidence="1">
    <location>
        <begin position="79"/>
        <end position="99"/>
    </location>
</feature>
<feature type="transmembrane region" description="Helical" evidence="1">
    <location>
        <begin position="125"/>
        <end position="145"/>
    </location>
</feature>
<feature type="transmembrane region" description="Helical" evidence="1">
    <location>
        <begin position="220"/>
        <end position="240"/>
    </location>
</feature>
<feature type="transmembrane region" description="Helical" evidence="1">
    <location>
        <begin position="248"/>
        <end position="268"/>
    </location>
</feature>
<feature type="transmembrane region" description="Helical" evidence="1">
    <location>
        <begin position="271"/>
        <end position="291"/>
    </location>
</feature>
<feature type="transmembrane region" description="Helical" evidence="1">
    <location>
        <begin position="297"/>
        <end position="317"/>
    </location>
</feature>
<feature type="transmembrane region" description="Helical" evidence="1">
    <location>
        <begin position="321"/>
        <end position="341"/>
    </location>
</feature>
<feature type="modified residue" description="FMN phosphoryl threonine" evidence="1">
    <location>
        <position position="186"/>
    </location>
</feature>
<sequence length="358" mass="39416">MFKMVSSPHTHSGKLTAHIMLWVILAMMPAFFTQIYYFGFGVVLQSALAIGTAIIAEFIAIKLRGKKPLNYLSDFSVALTALILAMAIPPYAPYWIIIIGTLCAVLLGKQVYGGLGQNPFNPAMIGYVILLISFPLQMTTWMPPINLLQEPPTFSDTFSLIFSGLTTDGFTLSQLTHNIDGITQATPLDSAKIFYKSHNQLSDFYELIKLPIFMGNGTDFAQGWWQINVAFLAGGIFLILKRIIHWQIPVAMLVTFFCLATATAFTGFTHLSAISQLVSGAMMFGAFFIATDPVTASITPRGKIIFGALVGLFVYLIRYHGNYPDGVAFAILLSNICVPLIDHYTRPRVSGYPTKGRK</sequence>
<organism>
    <name type="scientific">Haemophilus influenzae (strain 86-028NP)</name>
    <dbReference type="NCBI Taxonomy" id="281310"/>
    <lineage>
        <taxon>Bacteria</taxon>
        <taxon>Pseudomonadati</taxon>
        <taxon>Pseudomonadota</taxon>
        <taxon>Gammaproteobacteria</taxon>
        <taxon>Pasteurellales</taxon>
        <taxon>Pasteurellaceae</taxon>
        <taxon>Haemophilus</taxon>
    </lineage>
</organism>
<proteinExistence type="inferred from homology"/>
<dbReference type="EC" id="7.-.-.-" evidence="1"/>
<dbReference type="EMBL" id="CP000057">
    <property type="protein sequence ID" value="AAX88742.1"/>
    <property type="molecule type" value="Genomic_DNA"/>
</dbReference>
<dbReference type="RefSeq" id="WP_011272748.1">
    <property type="nucleotide sequence ID" value="NC_007146.2"/>
</dbReference>
<dbReference type="SMR" id="Q4QJQ5"/>
<dbReference type="KEGG" id="hit:NTHI1993"/>
<dbReference type="HOGENOM" id="CLU_042020_0_0_6"/>
<dbReference type="Proteomes" id="UP000002525">
    <property type="component" value="Chromosome"/>
</dbReference>
<dbReference type="GO" id="GO:0005886">
    <property type="term" value="C:plasma membrane"/>
    <property type="evidence" value="ECO:0007669"/>
    <property type="project" value="UniProtKB-SubCell"/>
</dbReference>
<dbReference type="GO" id="GO:0022900">
    <property type="term" value="P:electron transport chain"/>
    <property type="evidence" value="ECO:0007669"/>
    <property type="project" value="UniProtKB-UniRule"/>
</dbReference>
<dbReference type="GO" id="GO:0055085">
    <property type="term" value="P:transmembrane transport"/>
    <property type="evidence" value="ECO:0007669"/>
    <property type="project" value="InterPro"/>
</dbReference>
<dbReference type="HAMAP" id="MF_00462">
    <property type="entry name" value="RsxD_RnfD"/>
    <property type="match status" value="1"/>
</dbReference>
<dbReference type="InterPro" id="IPR004338">
    <property type="entry name" value="NqrB/RnfD"/>
</dbReference>
<dbReference type="InterPro" id="IPR011303">
    <property type="entry name" value="RnfD_bac"/>
</dbReference>
<dbReference type="NCBIfam" id="NF002011">
    <property type="entry name" value="PRK00816.1"/>
    <property type="match status" value="1"/>
</dbReference>
<dbReference type="NCBIfam" id="TIGR01946">
    <property type="entry name" value="rnfD"/>
    <property type="match status" value="1"/>
</dbReference>
<dbReference type="PANTHER" id="PTHR30578">
    <property type="entry name" value="ELECTRON TRANSPORT COMPLEX PROTEIN RNFD"/>
    <property type="match status" value="1"/>
</dbReference>
<dbReference type="PANTHER" id="PTHR30578:SF0">
    <property type="entry name" value="ION-TRANSLOCATING OXIDOREDUCTASE COMPLEX SUBUNIT D"/>
    <property type="match status" value="1"/>
</dbReference>
<dbReference type="Pfam" id="PF03116">
    <property type="entry name" value="NQR2_RnfD_RnfE"/>
    <property type="match status" value="1"/>
</dbReference>
<keyword id="KW-0997">Cell inner membrane</keyword>
<keyword id="KW-1003">Cell membrane</keyword>
<keyword id="KW-0249">Electron transport</keyword>
<keyword id="KW-0285">Flavoprotein</keyword>
<keyword id="KW-0288">FMN</keyword>
<keyword id="KW-0472">Membrane</keyword>
<keyword id="KW-0597">Phosphoprotein</keyword>
<keyword id="KW-1278">Translocase</keyword>
<keyword id="KW-0812">Transmembrane</keyword>
<keyword id="KW-1133">Transmembrane helix</keyword>
<keyword id="KW-0813">Transport</keyword>
<gene>
    <name evidence="1" type="primary">rnfD</name>
    <name type="ordered locus">NTHI1993</name>
</gene>
<protein>
    <recommendedName>
        <fullName evidence="1">Ion-translocating oxidoreductase complex subunit D</fullName>
        <ecNumber evidence="1">7.-.-.-</ecNumber>
    </recommendedName>
    <alternativeName>
        <fullName evidence="1">Rnf electron transport complex subunit D</fullName>
    </alternativeName>
</protein>
<comment type="function">
    <text evidence="1">Part of a membrane-bound complex that couples electron transfer with translocation of ions across the membrane.</text>
</comment>
<comment type="cofactor">
    <cofactor evidence="1">
        <name>FMN</name>
        <dbReference type="ChEBI" id="CHEBI:58210"/>
    </cofactor>
</comment>
<comment type="subunit">
    <text evidence="1">The complex is composed of six subunits: RnfA, RnfB, RnfC, RnfD, RnfE and RnfG.</text>
</comment>
<comment type="subcellular location">
    <subcellularLocation>
        <location evidence="1">Cell inner membrane</location>
        <topology evidence="1">Multi-pass membrane protein</topology>
    </subcellularLocation>
</comment>
<comment type="similarity">
    <text evidence="1">Belongs to the NqrB/RnfD family.</text>
</comment>
<evidence type="ECO:0000255" key="1">
    <source>
        <dbReference type="HAMAP-Rule" id="MF_00462"/>
    </source>
</evidence>
<accession>Q4QJQ5</accession>
<name>RNFD_HAEI8</name>
<reference key="1">
    <citation type="journal article" date="2005" name="J. Bacteriol.">
        <title>Genomic sequence of an otitis media isolate of nontypeable Haemophilus influenzae: comparative study with H. influenzae serotype d, strain KW20.</title>
        <authorList>
            <person name="Harrison A."/>
            <person name="Dyer D.W."/>
            <person name="Gillaspy A."/>
            <person name="Ray W.C."/>
            <person name="Mungur R."/>
            <person name="Carson M.B."/>
            <person name="Zhong H."/>
            <person name="Gipson J."/>
            <person name="Gipson M."/>
            <person name="Johnson L.S."/>
            <person name="Lewis L."/>
            <person name="Bakaletz L.O."/>
            <person name="Munson R.S. Jr."/>
        </authorList>
    </citation>
    <scope>NUCLEOTIDE SEQUENCE [LARGE SCALE GENOMIC DNA]</scope>
    <source>
        <strain>86-028NP</strain>
    </source>
</reference>